<organism>
    <name type="scientific">Nitrosococcus oceani (strain ATCC 19707 / BCRC 17464 / JCM 30415 / NCIMB 11848 / C-107)</name>
    <dbReference type="NCBI Taxonomy" id="323261"/>
    <lineage>
        <taxon>Bacteria</taxon>
        <taxon>Pseudomonadati</taxon>
        <taxon>Pseudomonadota</taxon>
        <taxon>Gammaproteobacteria</taxon>
        <taxon>Chromatiales</taxon>
        <taxon>Chromatiaceae</taxon>
        <taxon>Nitrosococcus</taxon>
    </lineage>
</organism>
<evidence type="ECO:0000255" key="1">
    <source>
        <dbReference type="HAMAP-Rule" id="MF_00278"/>
    </source>
</evidence>
<keyword id="KW-0028">Amino-acid biosynthesis</keyword>
<keyword id="KW-0963">Cytoplasm</keyword>
<keyword id="KW-0315">Glutamine amidotransferase</keyword>
<keyword id="KW-0368">Histidine biosynthesis</keyword>
<keyword id="KW-0378">Hydrolase</keyword>
<keyword id="KW-0456">Lyase</keyword>
<keyword id="KW-1185">Reference proteome</keyword>
<accession>Q3J6Q3</accession>
<sequence length="209" mass="23187">MSSVAVIDYGMGNLRSVSKALEQVAGKVRIDVTSNPQRIRAADRVVFPGVGAIRDCMHELRRLNLDIVVAQCAADRPFLGICLGLQALLELSEENHGVPCLGILPGRVQRFDAVKADLKVPHMGWNQAHQVRAHPLWNAIPQNCRFYFVHSYYTVPDETSLVASRTDYSTSFASALARDNIFAVQFHPEKSHTFGLQLLANFLTWNGVS</sequence>
<dbReference type="EC" id="4.3.2.10" evidence="1"/>
<dbReference type="EC" id="3.5.1.2" evidence="1"/>
<dbReference type="EMBL" id="CP000127">
    <property type="protein sequence ID" value="ABA59493.1"/>
    <property type="molecule type" value="Genomic_DNA"/>
</dbReference>
<dbReference type="RefSeq" id="WP_002813411.1">
    <property type="nucleotide sequence ID" value="NC_007484.1"/>
</dbReference>
<dbReference type="SMR" id="Q3J6Q3"/>
<dbReference type="FunCoup" id="Q3J6Q3">
    <property type="interactions" value="306"/>
</dbReference>
<dbReference type="STRING" id="323261.Noc_3052"/>
<dbReference type="KEGG" id="noc:Noc_3052"/>
<dbReference type="eggNOG" id="COG0118">
    <property type="taxonomic scope" value="Bacteria"/>
</dbReference>
<dbReference type="HOGENOM" id="CLU_071837_2_0_6"/>
<dbReference type="InParanoid" id="Q3J6Q3"/>
<dbReference type="UniPathway" id="UPA00031">
    <property type="reaction ID" value="UER00010"/>
</dbReference>
<dbReference type="Proteomes" id="UP000006838">
    <property type="component" value="Chromosome"/>
</dbReference>
<dbReference type="GO" id="GO:0005737">
    <property type="term" value="C:cytoplasm"/>
    <property type="evidence" value="ECO:0007669"/>
    <property type="project" value="UniProtKB-SubCell"/>
</dbReference>
<dbReference type="GO" id="GO:0004359">
    <property type="term" value="F:glutaminase activity"/>
    <property type="evidence" value="ECO:0007669"/>
    <property type="project" value="UniProtKB-EC"/>
</dbReference>
<dbReference type="GO" id="GO:0000107">
    <property type="term" value="F:imidazoleglycerol-phosphate synthase activity"/>
    <property type="evidence" value="ECO:0007669"/>
    <property type="project" value="UniProtKB-UniRule"/>
</dbReference>
<dbReference type="GO" id="GO:0016829">
    <property type="term" value="F:lyase activity"/>
    <property type="evidence" value="ECO:0007669"/>
    <property type="project" value="UniProtKB-KW"/>
</dbReference>
<dbReference type="GO" id="GO:0000105">
    <property type="term" value="P:L-histidine biosynthetic process"/>
    <property type="evidence" value="ECO:0007669"/>
    <property type="project" value="UniProtKB-UniRule"/>
</dbReference>
<dbReference type="CDD" id="cd01748">
    <property type="entry name" value="GATase1_IGP_Synthase"/>
    <property type="match status" value="1"/>
</dbReference>
<dbReference type="Gene3D" id="3.40.50.880">
    <property type="match status" value="1"/>
</dbReference>
<dbReference type="HAMAP" id="MF_00278">
    <property type="entry name" value="HisH"/>
    <property type="match status" value="1"/>
</dbReference>
<dbReference type="InterPro" id="IPR029062">
    <property type="entry name" value="Class_I_gatase-like"/>
</dbReference>
<dbReference type="InterPro" id="IPR017926">
    <property type="entry name" value="GATASE"/>
</dbReference>
<dbReference type="InterPro" id="IPR010139">
    <property type="entry name" value="Imidazole-glycPsynth_HisH"/>
</dbReference>
<dbReference type="NCBIfam" id="TIGR01855">
    <property type="entry name" value="IMP_synth_hisH"/>
    <property type="match status" value="1"/>
</dbReference>
<dbReference type="PANTHER" id="PTHR42701">
    <property type="entry name" value="IMIDAZOLE GLYCEROL PHOSPHATE SYNTHASE SUBUNIT HISH"/>
    <property type="match status" value="1"/>
</dbReference>
<dbReference type="PANTHER" id="PTHR42701:SF2">
    <property type="entry name" value="IMIDAZOLE GLYCEROL PHOSPHATE SYNTHASE SUBUNIT HISH 1"/>
    <property type="match status" value="1"/>
</dbReference>
<dbReference type="Pfam" id="PF00117">
    <property type="entry name" value="GATase"/>
    <property type="match status" value="1"/>
</dbReference>
<dbReference type="PIRSF" id="PIRSF000495">
    <property type="entry name" value="Amidotransf_hisH"/>
    <property type="match status" value="1"/>
</dbReference>
<dbReference type="SUPFAM" id="SSF52317">
    <property type="entry name" value="Class I glutamine amidotransferase-like"/>
    <property type="match status" value="1"/>
</dbReference>
<dbReference type="PROSITE" id="PS51273">
    <property type="entry name" value="GATASE_TYPE_1"/>
    <property type="match status" value="1"/>
</dbReference>
<gene>
    <name evidence="1" type="primary">hisH</name>
    <name type="ordered locus">Noc_3052</name>
</gene>
<name>HIS5_NITOC</name>
<proteinExistence type="inferred from homology"/>
<reference key="1">
    <citation type="journal article" date="2006" name="Appl. Environ. Microbiol.">
        <title>Complete genome sequence of the marine, chemolithoautotrophic, ammonia-oxidizing bacterium Nitrosococcus oceani ATCC 19707.</title>
        <authorList>
            <person name="Klotz M.G."/>
            <person name="Arp D.J."/>
            <person name="Chain P.S.G."/>
            <person name="El-Sheikh A.F."/>
            <person name="Hauser L.J."/>
            <person name="Hommes N.G."/>
            <person name="Larimer F.W."/>
            <person name="Malfatti S.A."/>
            <person name="Norton J.M."/>
            <person name="Poret-Peterson A.T."/>
            <person name="Vergez L.M."/>
            <person name="Ward B.B."/>
        </authorList>
    </citation>
    <scope>NUCLEOTIDE SEQUENCE [LARGE SCALE GENOMIC DNA]</scope>
    <source>
        <strain>ATCC 19707 / BCRC 17464 / JCM 30415 / NCIMB 11848 / C-107</strain>
    </source>
</reference>
<comment type="function">
    <text evidence="1">IGPS catalyzes the conversion of PRFAR and glutamine to IGP, AICAR and glutamate. The HisH subunit catalyzes the hydrolysis of glutamine to glutamate and ammonia as part of the synthesis of IGP and AICAR. The resulting ammonia molecule is channeled to the active site of HisF.</text>
</comment>
<comment type="catalytic activity">
    <reaction evidence="1">
        <text>5-[(5-phospho-1-deoxy-D-ribulos-1-ylimino)methylamino]-1-(5-phospho-beta-D-ribosyl)imidazole-4-carboxamide + L-glutamine = D-erythro-1-(imidazol-4-yl)glycerol 3-phosphate + 5-amino-1-(5-phospho-beta-D-ribosyl)imidazole-4-carboxamide + L-glutamate + H(+)</text>
        <dbReference type="Rhea" id="RHEA:24793"/>
        <dbReference type="ChEBI" id="CHEBI:15378"/>
        <dbReference type="ChEBI" id="CHEBI:29985"/>
        <dbReference type="ChEBI" id="CHEBI:58278"/>
        <dbReference type="ChEBI" id="CHEBI:58359"/>
        <dbReference type="ChEBI" id="CHEBI:58475"/>
        <dbReference type="ChEBI" id="CHEBI:58525"/>
        <dbReference type="EC" id="4.3.2.10"/>
    </reaction>
</comment>
<comment type="catalytic activity">
    <reaction evidence="1">
        <text>L-glutamine + H2O = L-glutamate + NH4(+)</text>
        <dbReference type="Rhea" id="RHEA:15889"/>
        <dbReference type="ChEBI" id="CHEBI:15377"/>
        <dbReference type="ChEBI" id="CHEBI:28938"/>
        <dbReference type="ChEBI" id="CHEBI:29985"/>
        <dbReference type="ChEBI" id="CHEBI:58359"/>
        <dbReference type="EC" id="3.5.1.2"/>
    </reaction>
</comment>
<comment type="pathway">
    <text evidence="1">Amino-acid biosynthesis; L-histidine biosynthesis; L-histidine from 5-phospho-alpha-D-ribose 1-diphosphate: step 5/9.</text>
</comment>
<comment type="subunit">
    <text evidence="1">Heterodimer of HisH and HisF.</text>
</comment>
<comment type="subcellular location">
    <subcellularLocation>
        <location evidence="1">Cytoplasm</location>
    </subcellularLocation>
</comment>
<feature type="chain" id="PRO_0000231739" description="Imidazole glycerol phosphate synthase subunit HisH">
    <location>
        <begin position="1"/>
        <end position="209"/>
    </location>
</feature>
<feature type="domain" description="Glutamine amidotransferase type-1" evidence="1">
    <location>
        <begin position="3"/>
        <end position="209"/>
    </location>
</feature>
<feature type="active site" description="Nucleophile" evidence="1">
    <location>
        <position position="82"/>
    </location>
</feature>
<feature type="active site" evidence="1">
    <location>
        <position position="187"/>
    </location>
</feature>
<feature type="active site" evidence="1">
    <location>
        <position position="189"/>
    </location>
</feature>
<protein>
    <recommendedName>
        <fullName evidence="1">Imidazole glycerol phosphate synthase subunit HisH</fullName>
        <ecNumber evidence="1">4.3.2.10</ecNumber>
    </recommendedName>
    <alternativeName>
        <fullName evidence="1">IGP synthase glutaminase subunit</fullName>
        <ecNumber evidence="1">3.5.1.2</ecNumber>
    </alternativeName>
    <alternativeName>
        <fullName evidence="1">IGP synthase subunit HisH</fullName>
    </alternativeName>
    <alternativeName>
        <fullName evidence="1">ImGP synthase subunit HisH</fullName>
        <shortName evidence="1">IGPS subunit HisH</shortName>
    </alternativeName>
</protein>